<keyword id="KW-0687">Ribonucleoprotein</keyword>
<keyword id="KW-0689">Ribosomal protein</keyword>
<protein>
    <recommendedName>
        <fullName evidence="1">Large ribosomal subunit protein uL13</fullName>
    </recommendedName>
    <alternativeName>
        <fullName evidence="2">50S ribosomal protein L13</fullName>
    </alternativeName>
</protein>
<sequence length="143" mass="16222">MKTFSAKPHEVKREWFVIDAQDKVLGRVAAEVASRLRGKHKPEYTPHVDTGDYIIVINADKLRVTGAKFEDKKYFRHSGFPGGIYERTFREMQEQFPGRALEQAVKGMLPKGPLGYAMIKKLKVYAGAEHAHAAQQPKVLELK</sequence>
<gene>
    <name evidence="1" type="primary">rplM</name>
    <name type="ordered locus">NMCC_0129</name>
</gene>
<name>RL13_NEIM0</name>
<evidence type="ECO:0000255" key="1">
    <source>
        <dbReference type="HAMAP-Rule" id="MF_01366"/>
    </source>
</evidence>
<evidence type="ECO:0000305" key="2"/>
<reference key="1">
    <citation type="journal article" date="2008" name="Genomics">
        <title>Characterization of ST-4821 complex, a unique Neisseria meningitidis clone.</title>
        <authorList>
            <person name="Peng J."/>
            <person name="Yang L."/>
            <person name="Yang F."/>
            <person name="Yang J."/>
            <person name="Yan Y."/>
            <person name="Nie H."/>
            <person name="Zhang X."/>
            <person name="Xiong Z."/>
            <person name="Jiang Y."/>
            <person name="Cheng F."/>
            <person name="Xu X."/>
            <person name="Chen S."/>
            <person name="Sun L."/>
            <person name="Li W."/>
            <person name="Shen Y."/>
            <person name="Shao Z."/>
            <person name="Liang X."/>
            <person name="Xu J."/>
            <person name="Jin Q."/>
        </authorList>
    </citation>
    <scope>NUCLEOTIDE SEQUENCE [LARGE SCALE GENOMIC DNA]</scope>
    <source>
        <strain>053442</strain>
    </source>
</reference>
<accession>A9M087</accession>
<feature type="chain" id="PRO_1000087095" description="Large ribosomal subunit protein uL13">
    <location>
        <begin position="1"/>
        <end position="143"/>
    </location>
</feature>
<proteinExistence type="inferred from homology"/>
<comment type="function">
    <text evidence="1">This protein is one of the early assembly proteins of the 50S ribosomal subunit, although it is not seen to bind rRNA by itself. It is important during the early stages of 50S assembly.</text>
</comment>
<comment type="subunit">
    <text evidence="1">Part of the 50S ribosomal subunit.</text>
</comment>
<comment type="similarity">
    <text evidence="1">Belongs to the universal ribosomal protein uL13 family.</text>
</comment>
<organism>
    <name type="scientific">Neisseria meningitidis serogroup C (strain 053442)</name>
    <dbReference type="NCBI Taxonomy" id="374833"/>
    <lineage>
        <taxon>Bacteria</taxon>
        <taxon>Pseudomonadati</taxon>
        <taxon>Pseudomonadota</taxon>
        <taxon>Betaproteobacteria</taxon>
        <taxon>Neisseriales</taxon>
        <taxon>Neisseriaceae</taxon>
        <taxon>Neisseria</taxon>
    </lineage>
</organism>
<dbReference type="EMBL" id="CP000381">
    <property type="protein sequence ID" value="ABX72348.1"/>
    <property type="molecule type" value="Genomic_DNA"/>
</dbReference>
<dbReference type="RefSeq" id="WP_002215010.1">
    <property type="nucleotide sequence ID" value="NC_010120.1"/>
</dbReference>
<dbReference type="SMR" id="A9M087"/>
<dbReference type="GeneID" id="93386984"/>
<dbReference type="KEGG" id="nmn:NMCC_0129"/>
<dbReference type="HOGENOM" id="CLU_082184_2_2_4"/>
<dbReference type="Proteomes" id="UP000001177">
    <property type="component" value="Chromosome"/>
</dbReference>
<dbReference type="GO" id="GO:0022625">
    <property type="term" value="C:cytosolic large ribosomal subunit"/>
    <property type="evidence" value="ECO:0007669"/>
    <property type="project" value="TreeGrafter"/>
</dbReference>
<dbReference type="GO" id="GO:0003729">
    <property type="term" value="F:mRNA binding"/>
    <property type="evidence" value="ECO:0007669"/>
    <property type="project" value="TreeGrafter"/>
</dbReference>
<dbReference type="GO" id="GO:0003735">
    <property type="term" value="F:structural constituent of ribosome"/>
    <property type="evidence" value="ECO:0007669"/>
    <property type="project" value="InterPro"/>
</dbReference>
<dbReference type="GO" id="GO:0017148">
    <property type="term" value="P:negative regulation of translation"/>
    <property type="evidence" value="ECO:0007669"/>
    <property type="project" value="TreeGrafter"/>
</dbReference>
<dbReference type="GO" id="GO:0006412">
    <property type="term" value="P:translation"/>
    <property type="evidence" value="ECO:0007669"/>
    <property type="project" value="UniProtKB-UniRule"/>
</dbReference>
<dbReference type="CDD" id="cd00392">
    <property type="entry name" value="Ribosomal_L13"/>
    <property type="match status" value="1"/>
</dbReference>
<dbReference type="FunFam" id="3.90.1180.10:FF:000001">
    <property type="entry name" value="50S ribosomal protein L13"/>
    <property type="match status" value="1"/>
</dbReference>
<dbReference type="Gene3D" id="3.90.1180.10">
    <property type="entry name" value="Ribosomal protein L13"/>
    <property type="match status" value="1"/>
</dbReference>
<dbReference type="HAMAP" id="MF_01366">
    <property type="entry name" value="Ribosomal_uL13"/>
    <property type="match status" value="1"/>
</dbReference>
<dbReference type="InterPro" id="IPR005822">
    <property type="entry name" value="Ribosomal_uL13"/>
</dbReference>
<dbReference type="InterPro" id="IPR005823">
    <property type="entry name" value="Ribosomal_uL13_bac-type"/>
</dbReference>
<dbReference type="InterPro" id="IPR036899">
    <property type="entry name" value="Ribosomal_uL13_sf"/>
</dbReference>
<dbReference type="NCBIfam" id="TIGR01066">
    <property type="entry name" value="rplM_bact"/>
    <property type="match status" value="1"/>
</dbReference>
<dbReference type="PANTHER" id="PTHR11545:SF2">
    <property type="entry name" value="LARGE RIBOSOMAL SUBUNIT PROTEIN UL13M"/>
    <property type="match status" value="1"/>
</dbReference>
<dbReference type="PANTHER" id="PTHR11545">
    <property type="entry name" value="RIBOSOMAL PROTEIN L13"/>
    <property type="match status" value="1"/>
</dbReference>
<dbReference type="Pfam" id="PF00572">
    <property type="entry name" value="Ribosomal_L13"/>
    <property type="match status" value="1"/>
</dbReference>
<dbReference type="PIRSF" id="PIRSF002181">
    <property type="entry name" value="Ribosomal_L13"/>
    <property type="match status" value="1"/>
</dbReference>
<dbReference type="SUPFAM" id="SSF52161">
    <property type="entry name" value="Ribosomal protein L13"/>
    <property type="match status" value="1"/>
</dbReference>